<comment type="function">
    <text evidence="2">Component of the anaphase promoting complex/cyclosome (APC/C), a cell cycle-regulated E3 ubiquitin ligase that controls progression through mitosis and the G1 phase of the cell cycle. The APC/C complex acts by mediating ubiquitination and subsequent degradation of target proteins: it mainly mediates the formation of 'Lys-11'-linked polyubiquitin chains and, to a lower extent, the formation of 'Lys-48'- and 'Lys-63'-linked polyubiquitin chains. The APC/C complex catalyzes assembly of branched 'Lys-11'-/'Lys-48'-linked branched ubiquitin chains on target proteins.</text>
</comment>
<comment type="pathway">
    <text evidence="2">Protein modification; protein ubiquitination.</text>
</comment>
<comment type="subunit">
    <text evidence="1 2">The mammalian APC/C is composed at least of 14 distinct subunits ANAPC1, ANAPC2, CDC27/APC3, ANAPC4, ANAPC5, CDC16/APC6, ANAPC7, CDC23/APC8, ANAPC10, ANAPC11, CDC26/APC12, ANAPC13, ANAPC15 and ANAPC16 that assemble into a complex of at least 19 chains with a combined molecular mass of around 1.2 MDa; APC/C interacts with FZR1 and FBXO5. The C-terminus of APC10 binds to CDC27/APC3 (By similarity). Interacts with PIWIL1; interaction only takes place when PIWIL1 binds piRNA (By similarity). Interacts with FBXO43; the interaction is direct.</text>
</comment>
<comment type="similarity">
    <text evidence="4">Belongs to the APC10 family.</text>
</comment>
<dbReference type="EMBL" id="BC110224">
    <property type="protein sequence ID" value="AAI10225.1"/>
    <property type="molecule type" value="mRNA"/>
</dbReference>
<dbReference type="RefSeq" id="NP_001073826.1">
    <property type="nucleotide sequence ID" value="NM_001080357.2"/>
</dbReference>
<dbReference type="SMR" id="Q2YDH1"/>
<dbReference type="FunCoup" id="Q2YDH1">
    <property type="interactions" value="2143"/>
</dbReference>
<dbReference type="STRING" id="9913.ENSBTAP00000017721"/>
<dbReference type="PaxDb" id="9913-ENSBTAP00000017721"/>
<dbReference type="GeneID" id="783986"/>
<dbReference type="KEGG" id="bta:783986"/>
<dbReference type="CTD" id="10393"/>
<dbReference type="eggNOG" id="KOG3437">
    <property type="taxonomic scope" value="Eukaryota"/>
</dbReference>
<dbReference type="InParanoid" id="Q2YDH1"/>
<dbReference type="OrthoDB" id="24948at2759"/>
<dbReference type="UniPathway" id="UPA00143"/>
<dbReference type="Proteomes" id="UP000009136">
    <property type="component" value="Unplaced"/>
</dbReference>
<dbReference type="GO" id="GO:0005680">
    <property type="term" value="C:anaphase-promoting complex"/>
    <property type="evidence" value="ECO:0000250"/>
    <property type="project" value="UniProtKB"/>
</dbReference>
<dbReference type="GO" id="GO:0031145">
    <property type="term" value="P:anaphase-promoting complex-dependent catabolic process"/>
    <property type="evidence" value="ECO:0000250"/>
    <property type="project" value="UniProtKB"/>
</dbReference>
<dbReference type="GO" id="GO:0051301">
    <property type="term" value="P:cell division"/>
    <property type="evidence" value="ECO:0007669"/>
    <property type="project" value="UniProtKB-KW"/>
</dbReference>
<dbReference type="GO" id="GO:0141198">
    <property type="term" value="P:protein branched polyubiquitination"/>
    <property type="evidence" value="ECO:0000250"/>
    <property type="project" value="UniProtKB"/>
</dbReference>
<dbReference type="GO" id="GO:0070979">
    <property type="term" value="P:protein K11-linked ubiquitination"/>
    <property type="evidence" value="ECO:0000250"/>
    <property type="project" value="UniProtKB"/>
</dbReference>
<dbReference type="GO" id="GO:0070936">
    <property type="term" value="P:protein K48-linked ubiquitination"/>
    <property type="evidence" value="ECO:0000250"/>
    <property type="project" value="UniProtKB"/>
</dbReference>
<dbReference type="CDD" id="cd08366">
    <property type="entry name" value="APC10"/>
    <property type="match status" value="1"/>
</dbReference>
<dbReference type="FunFam" id="2.60.120.260:FF:000019">
    <property type="entry name" value="Anaphase-promoting complex subunit 10"/>
    <property type="match status" value="1"/>
</dbReference>
<dbReference type="Gene3D" id="2.60.120.260">
    <property type="entry name" value="Galactose-binding domain-like"/>
    <property type="match status" value="1"/>
</dbReference>
<dbReference type="InterPro" id="IPR016901">
    <property type="entry name" value="APC10/Doc1"/>
</dbReference>
<dbReference type="InterPro" id="IPR004939">
    <property type="entry name" value="APC_su10/DOC_dom"/>
</dbReference>
<dbReference type="InterPro" id="IPR008979">
    <property type="entry name" value="Galactose-bd-like_sf"/>
</dbReference>
<dbReference type="PANTHER" id="PTHR12936">
    <property type="entry name" value="ANAPHASE-PROMOTING COMPLEX 10"/>
    <property type="match status" value="1"/>
</dbReference>
<dbReference type="PANTHER" id="PTHR12936:SF0">
    <property type="entry name" value="ANAPHASE-PROMOTING COMPLEX SUBUNIT 10"/>
    <property type="match status" value="1"/>
</dbReference>
<dbReference type="Pfam" id="PF03256">
    <property type="entry name" value="ANAPC10"/>
    <property type="match status" value="1"/>
</dbReference>
<dbReference type="PIRSF" id="PIRSF028841">
    <property type="entry name" value="APC10_sub"/>
    <property type="match status" value="1"/>
</dbReference>
<dbReference type="SMART" id="SM01337">
    <property type="entry name" value="APC10"/>
    <property type="match status" value="1"/>
</dbReference>
<dbReference type="SUPFAM" id="SSF49785">
    <property type="entry name" value="Galactose-binding domain-like"/>
    <property type="match status" value="1"/>
</dbReference>
<dbReference type="PROSITE" id="PS51284">
    <property type="entry name" value="DOC"/>
    <property type="match status" value="1"/>
</dbReference>
<gene>
    <name type="primary">ANAPC10</name>
    <name type="synonym">APC10</name>
</gene>
<proteinExistence type="evidence at transcript level"/>
<feature type="initiator methionine" description="Removed" evidence="2">
    <location>
        <position position="1"/>
    </location>
</feature>
<feature type="chain" id="PRO_0000345959" description="Anaphase-promoting complex subunit 10">
    <location>
        <begin position="2"/>
        <end position="185"/>
    </location>
</feature>
<feature type="domain" description="DOC" evidence="3">
    <location>
        <begin position="2"/>
        <end position="185"/>
    </location>
</feature>
<feature type="modified residue" description="N-acetylthreonine" evidence="2">
    <location>
        <position position="2"/>
    </location>
</feature>
<feature type="modified residue" description="N6-acetyllysine" evidence="1">
    <location>
        <position position="169"/>
    </location>
</feature>
<organism>
    <name type="scientific">Bos taurus</name>
    <name type="common">Bovine</name>
    <dbReference type="NCBI Taxonomy" id="9913"/>
    <lineage>
        <taxon>Eukaryota</taxon>
        <taxon>Metazoa</taxon>
        <taxon>Chordata</taxon>
        <taxon>Craniata</taxon>
        <taxon>Vertebrata</taxon>
        <taxon>Euteleostomi</taxon>
        <taxon>Mammalia</taxon>
        <taxon>Eutheria</taxon>
        <taxon>Laurasiatheria</taxon>
        <taxon>Artiodactyla</taxon>
        <taxon>Ruminantia</taxon>
        <taxon>Pecora</taxon>
        <taxon>Bovidae</taxon>
        <taxon>Bovinae</taxon>
        <taxon>Bos</taxon>
    </lineage>
</organism>
<name>APC10_BOVIN</name>
<evidence type="ECO:0000250" key="1">
    <source>
        <dbReference type="UniProtKB" id="Q8K2H6"/>
    </source>
</evidence>
<evidence type="ECO:0000250" key="2">
    <source>
        <dbReference type="UniProtKB" id="Q9UM13"/>
    </source>
</evidence>
<evidence type="ECO:0000255" key="3">
    <source>
        <dbReference type="PROSITE-ProRule" id="PRU00614"/>
    </source>
</evidence>
<evidence type="ECO:0000305" key="4"/>
<keyword id="KW-0007">Acetylation</keyword>
<keyword id="KW-0131">Cell cycle</keyword>
<keyword id="KW-0132">Cell division</keyword>
<keyword id="KW-0498">Mitosis</keyword>
<keyword id="KW-1185">Reference proteome</keyword>
<keyword id="KW-0833">Ubl conjugation pathway</keyword>
<sequence>MTTPNKTPPGADPKQLERTGTVREIGSQAVWSLSSCKPGFGVDQLRDDNLETYWQSDGSQPHLVNLQFRRKTTVKTLCIYADYKSDESYTPSKISVRVGNNFHNLQEIRQLELVEPSGWIHVPLTDNHKKPTRTFMIQIAVLANHQNGRDTHMRQIKIYTPVEESSIGKFPRCTTIDFMMYRSIR</sequence>
<reference key="1">
    <citation type="submission" date="2005-11" db="EMBL/GenBank/DDBJ databases">
        <authorList>
            <consortium name="NIH - Mammalian Gene Collection (MGC) project"/>
        </authorList>
    </citation>
    <scope>NUCLEOTIDE SEQUENCE [LARGE SCALE MRNA]</scope>
    <source>
        <strain>Crossbred X Angus</strain>
        <tissue>Liver</tissue>
    </source>
</reference>
<accession>Q2YDH1</accession>
<protein>
    <recommendedName>
        <fullName>Anaphase-promoting complex subunit 10</fullName>
        <shortName>APC10</shortName>
    </recommendedName>
    <alternativeName>
        <fullName>Cyclosome subunit 10</fullName>
    </alternativeName>
</protein>